<name>RRF_XANE5</name>
<reference key="1">
    <citation type="journal article" date="2005" name="J. Bacteriol.">
        <title>Insights into genome plasticity and pathogenicity of the plant pathogenic Bacterium Xanthomonas campestris pv. vesicatoria revealed by the complete genome sequence.</title>
        <authorList>
            <person name="Thieme F."/>
            <person name="Koebnik R."/>
            <person name="Bekel T."/>
            <person name="Berger C."/>
            <person name="Boch J."/>
            <person name="Buettner D."/>
            <person name="Caldana C."/>
            <person name="Gaigalat L."/>
            <person name="Goesmann A."/>
            <person name="Kay S."/>
            <person name="Kirchner O."/>
            <person name="Lanz C."/>
            <person name="Linke B."/>
            <person name="McHardy A.C."/>
            <person name="Meyer F."/>
            <person name="Mittenhuber G."/>
            <person name="Nies D.H."/>
            <person name="Niesbach-Kloesgen U."/>
            <person name="Patschkowski T."/>
            <person name="Rueckert C."/>
            <person name="Rupp O."/>
            <person name="Schneiker S."/>
            <person name="Schuster S.C."/>
            <person name="Vorhoelter F.J."/>
            <person name="Weber E."/>
            <person name="Puehler A."/>
            <person name="Bonas U."/>
            <person name="Bartels D."/>
            <person name="Kaiser O."/>
        </authorList>
    </citation>
    <scope>NUCLEOTIDE SEQUENCE [LARGE SCALE GENOMIC DNA]</scope>
    <source>
        <strain>85-10</strain>
    </source>
</reference>
<sequence length="185" mass="20352">MLTQIKQDAQTRMTKSIDALRHSLTTIRTGRASPALLDGIKVKAYGADTPLNQVASISVSEGRSLVISLFDKGMIKDVEKAIYASDLGLTPTVVGTVIRLNLPPLTEERRKELSKSVHGEGEDSKVAIRNIRRDANQQVKDLLKDKAVTEDEARSAEDDIQKLTDKAIKDVDEVVKGKEQELMTV</sequence>
<comment type="function">
    <text evidence="1">Responsible for the release of ribosomes from messenger RNA at the termination of protein biosynthesis. May increase the efficiency of translation by recycling ribosomes from one round of translation to another.</text>
</comment>
<comment type="subcellular location">
    <subcellularLocation>
        <location evidence="1">Cytoplasm</location>
    </subcellularLocation>
</comment>
<comment type="similarity">
    <text evidence="1">Belongs to the RRF family.</text>
</comment>
<proteinExistence type="inferred from homology"/>
<evidence type="ECO:0000255" key="1">
    <source>
        <dbReference type="HAMAP-Rule" id="MF_00040"/>
    </source>
</evidence>
<accession>Q3BVK7</accession>
<dbReference type="EMBL" id="AM039952">
    <property type="protein sequence ID" value="CAJ23106.1"/>
    <property type="molecule type" value="Genomic_DNA"/>
</dbReference>
<dbReference type="RefSeq" id="WP_005921623.1">
    <property type="nucleotide sequence ID" value="NZ_CP017190.1"/>
</dbReference>
<dbReference type="SMR" id="Q3BVK7"/>
<dbReference type="STRING" id="456327.BJD11_15270"/>
<dbReference type="GeneID" id="97509772"/>
<dbReference type="KEGG" id="xcv:XCV1475"/>
<dbReference type="eggNOG" id="COG0233">
    <property type="taxonomic scope" value="Bacteria"/>
</dbReference>
<dbReference type="HOGENOM" id="CLU_073981_2_0_6"/>
<dbReference type="Proteomes" id="UP000007069">
    <property type="component" value="Chromosome"/>
</dbReference>
<dbReference type="GO" id="GO:0005829">
    <property type="term" value="C:cytosol"/>
    <property type="evidence" value="ECO:0007669"/>
    <property type="project" value="GOC"/>
</dbReference>
<dbReference type="GO" id="GO:0043023">
    <property type="term" value="F:ribosomal large subunit binding"/>
    <property type="evidence" value="ECO:0007669"/>
    <property type="project" value="TreeGrafter"/>
</dbReference>
<dbReference type="GO" id="GO:0002184">
    <property type="term" value="P:cytoplasmic translational termination"/>
    <property type="evidence" value="ECO:0007669"/>
    <property type="project" value="TreeGrafter"/>
</dbReference>
<dbReference type="CDD" id="cd00520">
    <property type="entry name" value="RRF"/>
    <property type="match status" value="1"/>
</dbReference>
<dbReference type="FunFam" id="1.10.132.20:FF:000001">
    <property type="entry name" value="Ribosome-recycling factor"/>
    <property type="match status" value="1"/>
</dbReference>
<dbReference type="FunFam" id="3.30.1360.40:FF:000001">
    <property type="entry name" value="Ribosome-recycling factor"/>
    <property type="match status" value="1"/>
</dbReference>
<dbReference type="Gene3D" id="3.30.1360.40">
    <property type="match status" value="1"/>
</dbReference>
<dbReference type="Gene3D" id="1.10.132.20">
    <property type="entry name" value="Ribosome-recycling factor"/>
    <property type="match status" value="1"/>
</dbReference>
<dbReference type="HAMAP" id="MF_00040">
    <property type="entry name" value="RRF"/>
    <property type="match status" value="1"/>
</dbReference>
<dbReference type="InterPro" id="IPR002661">
    <property type="entry name" value="Ribosome_recyc_fac"/>
</dbReference>
<dbReference type="InterPro" id="IPR023584">
    <property type="entry name" value="Ribosome_recyc_fac_dom"/>
</dbReference>
<dbReference type="InterPro" id="IPR036191">
    <property type="entry name" value="RRF_sf"/>
</dbReference>
<dbReference type="NCBIfam" id="TIGR00496">
    <property type="entry name" value="frr"/>
    <property type="match status" value="1"/>
</dbReference>
<dbReference type="PANTHER" id="PTHR20982:SF3">
    <property type="entry name" value="MITOCHONDRIAL RIBOSOME RECYCLING FACTOR PSEUDO 1"/>
    <property type="match status" value="1"/>
</dbReference>
<dbReference type="PANTHER" id="PTHR20982">
    <property type="entry name" value="RIBOSOME RECYCLING FACTOR"/>
    <property type="match status" value="1"/>
</dbReference>
<dbReference type="Pfam" id="PF01765">
    <property type="entry name" value="RRF"/>
    <property type="match status" value="1"/>
</dbReference>
<dbReference type="SUPFAM" id="SSF55194">
    <property type="entry name" value="Ribosome recycling factor, RRF"/>
    <property type="match status" value="1"/>
</dbReference>
<organism>
    <name type="scientific">Xanthomonas euvesicatoria pv. vesicatoria (strain 85-10)</name>
    <name type="common">Xanthomonas campestris pv. vesicatoria</name>
    <dbReference type="NCBI Taxonomy" id="316273"/>
    <lineage>
        <taxon>Bacteria</taxon>
        <taxon>Pseudomonadati</taxon>
        <taxon>Pseudomonadota</taxon>
        <taxon>Gammaproteobacteria</taxon>
        <taxon>Lysobacterales</taxon>
        <taxon>Lysobacteraceae</taxon>
        <taxon>Xanthomonas</taxon>
    </lineage>
</organism>
<feature type="chain" id="PRO_1000003310" description="Ribosome-recycling factor">
    <location>
        <begin position="1"/>
        <end position="185"/>
    </location>
</feature>
<protein>
    <recommendedName>
        <fullName evidence="1">Ribosome-recycling factor</fullName>
        <shortName evidence="1">RRF</shortName>
    </recommendedName>
    <alternativeName>
        <fullName evidence="1">Ribosome-releasing factor</fullName>
    </alternativeName>
</protein>
<gene>
    <name evidence="1" type="primary">frr</name>
    <name type="ordered locus">XCV1475</name>
</gene>
<keyword id="KW-0963">Cytoplasm</keyword>
<keyword id="KW-0648">Protein biosynthesis</keyword>